<sequence length="289" mass="33109">MVPELQKSTVRIQQPERVMGVIRAIKEQGCSKLQVISDFDMTLSRFGCNGRRCPTSHNILDNSHVISEDGKKKLKDLLHHYYPIEIDPNRTLEEKRPLMVEWWTRAHELLSQQKIQKGDIAQIVRESDVMLRDGFNELFDQLHKYSVPMFIFSAGVGDVLEEIIRQANVFYPNVNVVSNYMDFDDSGVLKCFKSPLIHTYNKNNSVLQGTAYFQQLSTRTSIILLGDSMGDLTMADGVPSVENILKIGFLNDKVEEQRGRYLDAYDIVLESDETLDVVNGILRYILMET</sequence>
<evidence type="ECO:0000250" key="1"/>
<evidence type="ECO:0000250" key="2">
    <source>
        <dbReference type="UniProtKB" id="Q9H0P0"/>
    </source>
</evidence>
<evidence type="ECO:0000250" key="3">
    <source>
        <dbReference type="UniProtKB" id="Q9W197"/>
    </source>
</evidence>
<evidence type="ECO:0000305" key="4"/>
<feature type="chain" id="PRO_0000328951" description="7-methylguanosine phosphate-specific 5'-nucleotidase">
    <location>
        <begin position="1"/>
        <end position="289"/>
    </location>
</feature>
<feature type="active site" description="Nucleophile" evidence="3">
    <location>
        <position position="38"/>
    </location>
</feature>
<feature type="active site" description="Proton donor" evidence="3">
    <location>
        <position position="40"/>
    </location>
</feature>
<feature type="binding site" evidence="3">
    <location>
        <position position="38"/>
    </location>
    <ligand>
        <name>Mg(2+)</name>
        <dbReference type="ChEBI" id="CHEBI:18420"/>
    </ligand>
</feature>
<feature type="binding site" evidence="3">
    <location>
        <position position="40"/>
    </location>
    <ligand>
        <name>Mg(2+)</name>
        <dbReference type="ChEBI" id="CHEBI:18420"/>
    </ligand>
</feature>
<feature type="binding site" evidence="3">
    <location>
        <position position="85"/>
    </location>
    <ligand>
        <name>CMP</name>
        <dbReference type="ChEBI" id="CHEBI:60377"/>
    </ligand>
</feature>
<feature type="binding site" evidence="3">
    <location>
        <position position="85"/>
    </location>
    <ligand>
        <name>N(7)-methyl-GMP</name>
        <dbReference type="ChEBI" id="CHEBI:58285"/>
    </ligand>
</feature>
<feature type="binding site" evidence="2">
    <location>
        <begin position="153"/>
        <end position="154"/>
    </location>
    <ligand>
        <name>substrate</name>
    </ligand>
</feature>
<feature type="binding site" evidence="2">
    <location>
        <position position="202"/>
    </location>
    <ligand>
        <name>substrate</name>
    </ligand>
</feature>
<feature type="binding site" evidence="3">
    <location>
        <position position="227"/>
    </location>
    <ligand>
        <name>Mg(2+)</name>
        <dbReference type="ChEBI" id="CHEBI:18420"/>
    </ligand>
</feature>
<accession>Q5ZKF6</accession>
<gene>
    <name type="primary">NT5C3B</name>
    <name type="synonym">NT5C3L</name>
    <name type="ORF">RCJMB04_11c18</name>
</gene>
<name>5NT3B_CHICK</name>
<protein>
    <recommendedName>
        <fullName evidence="3">7-methylguanosine phosphate-specific 5'-nucleotidase</fullName>
        <shortName>7-methylguanosine nucleotidase</shortName>
        <ecNumber evidence="3">3.1.3.91</ecNumber>
    </recommendedName>
    <alternativeName>
        <fullName>Cytosolic 5'-nucleotidase 3B</fullName>
    </alternativeName>
    <alternativeName>
        <fullName evidence="3">Cytosolic 5'-nucleotidase III-like protein</fullName>
        <shortName>cN-III-like protein</shortName>
        <ecNumber evidence="3">3.1.3.5</ecNumber>
    </alternativeName>
    <alternativeName>
        <fullName>N(7)-methylguanylate 5'-phosphatase</fullName>
    </alternativeName>
</protein>
<proteinExistence type="evidence at transcript level"/>
<keyword id="KW-0963">Cytoplasm</keyword>
<keyword id="KW-0378">Hydrolase</keyword>
<keyword id="KW-0460">Magnesium</keyword>
<keyword id="KW-0479">Metal-binding</keyword>
<keyword id="KW-0546">Nucleotide metabolism</keyword>
<keyword id="KW-0547">Nucleotide-binding</keyword>
<keyword id="KW-1185">Reference proteome</keyword>
<comment type="function">
    <text evidence="1">Specifically hydrolyzes 7-methylguanosine monophosphate (m(7)GMP) to 7-methylguanosine and inorganic phosphate. The specific activity for m(7)GMP may protect cells against undesired salvage of m(7)GMP and its incorporation into nucleic acids. Also has weak activity for CMP. UMP and purine nucleotides are poor substrates (By similarity).</text>
</comment>
<comment type="catalytic activity">
    <reaction evidence="3">
        <text>N(7)-methyl-GMP + H2O = N(7)-methylguanosine + phosphate</text>
        <dbReference type="Rhea" id="RHEA:37107"/>
        <dbReference type="ChEBI" id="CHEBI:15377"/>
        <dbReference type="ChEBI" id="CHEBI:20794"/>
        <dbReference type="ChEBI" id="CHEBI:43474"/>
        <dbReference type="ChEBI" id="CHEBI:58285"/>
        <dbReference type="EC" id="3.1.3.91"/>
    </reaction>
</comment>
<comment type="catalytic activity">
    <reaction evidence="3">
        <text>CMP + H2O = cytidine + phosphate</text>
        <dbReference type="Rhea" id="RHEA:29367"/>
        <dbReference type="ChEBI" id="CHEBI:15377"/>
        <dbReference type="ChEBI" id="CHEBI:17562"/>
        <dbReference type="ChEBI" id="CHEBI:43474"/>
        <dbReference type="ChEBI" id="CHEBI:60377"/>
        <dbReference type="EC" id="3.1.3.91"/>
    </reaction>
</comment>
<comment type="catalytic activity">
    <reaction evidence="3">
        <text>a ribonucleoside 5'-phosphate + H2O = a ribonucleoside + phosphate</text>
        <dbReference type="Rhea" id="RHEA:12484"/>
        <dbReference type="ChEBI" id="CHEBI:15377"/>
        <dbReference type="ChEBI" id="CHEBI:18254"/>
        <dbReference type="ChEBI" id="CHEBI:43474"/>
        <dbReference type="ChEBI" id="CHEBI:58043"/>
        <dbReference type="EC" id="3.1.3.5"/>
    </reaction>
</comment>
<comment type="subunit">
    <text evidence="1">Monomer.</text>
</comment>
<comment type="subcellular location">
    <subcellularLocation>
        <location evidence="4">Cytoplasm</location>
    </subcellularLocation>
</comment>
<comment type="similarity">
    <text evidence="4">Belongs to the pyrimidine 5'-nucleotidase family.</text>
</comment>
<dbReference type="EC" id="3.1.3.91" evidence="3"/>
<dbReference type="EC" id="3.1.3.5" evidence="3"/>
<dbReference type="EMBL" id="AJ720128">
    <property type="protein sequence ID" value="CAG31787.1"/>
    <property type="molecule type" value="mRNA"/>
</dbReference>
<dbReference type="RefSeq" id="NP_001006334.1">
    <property type="nucleotide sequence ID" value="NM_001006334.2"/>
</dbReference>
<dbReference type="RefSeq" id="NP_001384331.1">
    <property type="nucleotide sequence ID" value="NM_001397402.1"/>
</dbReference>
<dbReference type="RefSeq" id="XP_015155089.1">
    <property type="nucleotide sequence ID" value="XM_015299603.1"/>
</dbReference>
<dbReference type="RefSeq" id="XP_015155090.1">
    <property type="nucleotide sequence ID" value="XM_015299604.1"/>
</dbReference>
<dbReference type="SMR" id="Q5ZKF6"/>
<dbReference type="FunCoup" id="Q5ZKF6">
    <property type="interactions" value="500"/>
</dbReference>
<dbReference type="STRING" id="9031.ENSGALP00000072917"/>
<dbReference type="PaxDb" id="9031-ENSGALP00000005776"/>
<dbReference type="GeneID" id="420034"/>
<dbReference type="KEGG" id="gga:420034"/>
<dbReference type="CTD" id="115024"/>
<dbReference type="VEuPathDB" id="HostDB:geneid_420034"/>
<dbReference type="eggNOG" id="KOG3128">
    <property type="taxonomic scope" value="Eukaryota"/>
</dbReference>
<dbReference type="HOGENOM" id="CLU_048584_0_2_1"/>
<dbReference type="InParanoid" id="Q5ZKF6"/>
<dbReference type="OrthoDB" id="10014216at2759"/>
<dbReference type="PhylomeDB" id="Q5ZKF6"/>
<dbReference type="TreeFam" id="TF314663"/>
<dbReference type="Reactome" id="R-GGA-429958">
    <property type="pathway name" value="mRNA decay by 3' to 5' exoribonuclease"/>
</dbReference>
<dbReference type="PRO" id="PR:Q5ZKF6"/>
<dbReference type="Proteomes" id="UP000000539">
    <property type="component" value="Chromosome 27"/>
</dbReference>
<dbReference type="Bgee" id="ENSGALG00000003651">
    <property type="expression patterns" value="Expressed in granulocyte and 13 other cell types or tissues"/>
</dbReference>
<dbReference type="GO" id="GO:0005737">
    <property type="term" value="C:cytoplasm"/>
    <property type="evidence" value="ECO:0000318"/>
    <property type="project" value="GO_Central"/>
</dbReference>
<dbReference type="GO" id="GO:0016787">
    <property type="term" value="F:hydrolase activity"/>
    <property type="evidence" value="ECO:0007669"/>
    <property type="project" value="UniProtKB-KW"/>
</dbReference>
<dbReference type="GO" id="GO:0000287">
    <property type="term" value="F:magnesium ion binding"/>
    <property type="evidence" value="ECO:0007669"/>
    <property type="project" value="InterPro"/>
</dbReference>
<dbReference type="GO" id="GO:0000166">
    <property type="term" value="F:nucleotide binding"/>
    <property type="evidence" value="ECO:0007669"/>
    <property type="project" value="UniProtKB-KW"/>
</dbReference>
<dbReference type="GO" id="GO:0009117">
    <property type="term" value="P:nucleotide metabolic process"/>
    <property type="evidence" value="ECO:0007669"/>
    <property type="project" value="UniProtKB-KW"/>
</dbReference>
<dbReference type="CDD" id="cd07504">
    <property type="entry name" value="HAD_5NT"/>
    <property type="match status" value="1"/>
</dbReference>
<dbReference type="FunFam" id="1.10.150.340:FF:000001">
    <property type="entry name" value="Cytosolic 5-nucleotidase 3-like"/>
    <property type="match status" value="1"/>
</dbReference>
<dbReference type="FunFam" id="3.40.50.1000:FF:000032">
    <property type="entry name" value="Cytosolic 5-nucleotidase 3-like"/>
    <property type="match status" value="1"/>
</dbReference>
<dbReference type="Gene3D" id="3.40.50.1000">
    <property type="entry name" value="HAD superfamily/HAD-like"/>
    <property type="match status" value="1"/>
</dbReference>
<dbReference type="Gene3D" id="1.10.150.340">
    <property type="entry name" value="Pyrimidine 5'-nucleotidase (UMPH-1), N-terminal domain"/>
    <property type="match status" value="1"/>
</dbReference>
<dbReference type="InterPro" id="IPR036412">
    <property type="entry name" value="HAD-like_sf"/>
</dbReference>
<dbReference type="InterPro" id="IPR023214">
    <property type="entry name" value="HAD_sf"/>
</dbReference>
<dbReference type="InterPro" id="IPR006434">
    <property type="entry name" value="Pyrimidine_nucleotidase_eu"/>
</dbReference>
<dbReference type="NCBIfam" id="TIGR01544">
    <property type="entry name" value="HAD-SF-IE"/>
    <property type="match status" value="1"/>
</dbReference>
<dbReference type="PANTHER" id="PTHR13045">
    <property type="entry name" value="5'-NUCLEOTIDASE"/>
    <property type="match status" value="1"/>
</dbReference>
<dbReference type="PANTHER" id="PTHR13045:SF15">
    <property type="entry name" value="7-METHYLGUANOSINE PHOSPHATE-SPECIFIC 5'-NUCLEOTIDASE"/>
    <property type="match status" value="1"/>
</dbReference>
<dbReference type="Pfam" id="PF05822">
    <property type="entry name" value="UMPH-1"/>
    <property type="match status" value="1"/>
</dbReference>
<dbReference type="SFLD" id="SFLDG01128">
    <property type="entry name" value="C1.4:_5'-Nucleotidase_Like"/>
    <property type="match status" value="1"/>
</dbReference>
<dbReference type="SFLD" id="SFLDS00003">
    <property type="entry name" value="Haloacid_Dehalogenase"/>
    <property type="match status" value="1"/>
</dbReference>
<dbReference type="SUPFAM" id="SSF56784">
    <property type="entry name" value="HAD-like"/>
    <property type="match status" value="1"/>
</dbReference>
<reference key="1">
    <citation type="journal article" date="2005" name="Genome Biol.">
        <title>Full-length cDNAs from chicken bursal lymphocytes to facilitate gene function analysis.</title>
        <authorList>
            <person name="Caldwell R.B."/>
            <person name="Kierzek A.M."/>
            <person name="Arakawa H."/>
            <person name="Bezzubov Y."/>
            <person name="Zaim J."/>
            <person name="Fiedler P."/>
            <person name="Kutter S."/>
            <person name="Blagodatski A."/>
            <person name="Kostovska D."/>
            <person name="Koter M."/>
            <person name="Plachy J."/>
            <person name="Carninci P."/>
            <person name="Hayashizaki Y."/>
            <person name="Buerstedde J.-M."/>
        </authorList>
    </citation>
    <scope>NUCLEOTIDE SEQUENCE [LARGE SCALE MRNA]</scope>
    <source>
        <strain>CB</strain>
        <tissue>Bursa of Fabricius</tissue>
    </source>
</reference>
<organism>
    <name type="scientific">Gallus gallus</name>
    <name type="common">Chicken</name>
    <dbReference type="NCBI Taxonomy" id="9031"/>
    <lineage>
        <taxon>Eukaryota</taxon>
        <taxon>Metazoa</taxon>
        <taxon>Chordata</taxon>
        <taxon>Craniata</taxon>
        <taxon>Vertebrata</taxon>
        <taxon>Euteleostomi</taxon>
        <taxon>Archelosauria</taxon>
        <taxon>Archosauria</taxon>
        <taxon>Dinosauria</taxon>
        <taxon>Saurischia</taxon>
        <taxon>Theropoda</taxon>
        <taxon>Coelurosauria</taxon>
        <taxon>Aves</taxon>
        <taxon>Neognathae</taxon>
        <taxon>Galloanserae</taxon>
        <taxon>Galliformes</taxon>
        <taxon>Phasianidae</taxon>
        <taxon>Phasianinae</taxon>
        <taxon>Gallus</taxon>
    </lineage>
</organism>